<protein>
    <recommendedName>
        <fullName evidence="6">Trans-enoyl reductase FFUJ_12240</fullName>
        <ecNumber evidence="6">1.-.-.-</ecNumber>
    </recommendedName>
    <alternativeName>
        <fullName evidence="5">Fujikurins biosynthesis cluster protein FFUJ_12240</fullName>
    </alternativeName>
</protein>
<sequence length="346" mass="36683">MQALVGAETGGYRLADNVEKPVLQPGSILCHVKAVALNPHDAKIVDYSNVPGALGGCDFAGVVVEIGNGVKRFKEGDRVFAVTFGMNASDKTAGAFTQYAVATEDLSCLIPEAMSFTEACSMGLAIATAGLALFQTPGLQLSMQGGNGEAVLVSGGATATGTMAIQFLRIAGYTPVVTCSPSNNALCESFGAEICFDYHSPTCGADIRVQTGNKLRHVLDCVVDISTMKMSYDAIGSSGGAYVALEAIPTNIKYTRRDICANWLMAPSILGTPVNKKGAYGRPSMPEHRQFGTYLFALAEKWLQDGSIKHHPIEIREGGLRSIREGIDDLRRGNVHAKKLVYPLSA</sequence>
<reference key="1">
    <citation type="journal article" date="2013" name="PLoS Pathog.">
        <title>Deciphering the cryptic genome: genome-wide analyses of the rice pathogen Fusarium fujikuroi reveal complex regulation of secondary metabolism and novel metabolites.</title>
        <authorList>
            <person name="Wiemann P."/>
            <person name="Sieber C.M.K."/>
            <person name="von Bargen K.W."/>
            <person name="Studt L."/>
            <person name="Niehaus E.-M."/>
            <person name="Espino J.J."/>
            <person name="Huss K."/>
            <person name="Michielse C.B."/>
            <person name="Albermann S."/>
            <person name="Wagner D."/>
            <person name="Bergner S.V."/>
            <person name="Connolly L.R."/>
            <person name="Fischer A."/>
            <person name="Reuter G."/>
            <person name="Kleigrewe K."/>
            <person name="Bald T."/>
            <person name="Wingfield B.D."/>
            <person name="Ophir R."/>
            <person name="Freeman S."/>
            <person name="Hippler M."/>
            <person name="Smith K.M."/>
            <person name="Brown D.W."/>
            <person name="Proctor R.H."/>
            <person name="Muensterkoetter M."/>
            <person name="Freitag M."/>
            <person name="Humpf H.-U."/>
            <person name="Gueldener U."/>
            <person name="Tudzynski B."/>
        </authorList>
    </citation>
    <scope>NUCLEOTIDE SEQUENCE [LARGE SCALE GENOMIC DNA]</scope>
    <scope>IDENTIFICATION</scope>
    <scope>FUNCTION</scope>
    <scope>INDUCTION</scope>
    <source>
        <strain>CBS 195.34 / IMI 58289 / NRRL A-6831</strain>
    </source>
</reference>
<reference key="2">
    <citation type="journal article" date="2015" name="J. Nat. Prod.">
        <title>Isolation and structure elucidation of fujikurins A-D: products of the PKS19 gene cluster in Fusarium fujikuroi.</title>
        <authorList>
            <person name="von Bargen K.W."/>
            <person name="Niehaus E.M."/>
            <person name="Krug I."/>
            <person name="Bergander K."/>
            <person name="Wuerthwein E.U."/>
            <person name="Tudzynski B."/>
            <person name="Humpf H.U."/>
        </authorList>
    </citation>
    <scope>FUNCTION</scope>
</reference>
<dbReference type="EC" id="1.-.-.-" evidence="6"/>
<dbReference type="EMBL" id="HF679030">
    <property type="protein sequence ID" value="CCT72378.1"/>
    <property type="molecule type" value="Genomic_DNA"/>
</dbReference>
<dbReference type="RefSeq" id="XP_023434456.1">
    <property type="nucleotide sequence ID" value="XM_023581822.1"/>
</dbReference>
<dbReference type="SMR" id="S0EJ18"/>
<dbReference type="STRING" id="1279085.S0EJ18"/>
<dbReference type="EnsemblFungi" id="CCT72378">
    <property type="protein sequence ID" value="CCT72378"/>
    <property type="gene ID" value="FFUJ_12240"/>
</dbReference>
<dbReference type="GeneID" id="35405696"/>
<dbReference type="VEuPathDB" id="FungiDB:FFUJ_12240"/>
<dbReference type="HOGENOM" id="CLU_026673_16_1_1"/>
<dbReference type="Proteomes" id="UP000016800">
    <property type="component" value="Chromosome 8"/>
</dbReference>
<dbReference type="GO" id="GO:0000166">
    <property type="term" value="F:nucleotide binding"/>
    <property type="evidence" value="ECO:0007669"/>
    <property type="project" value="UniProtKB-KW"/>
</dbReference>
<dbReference type="GO" id="GO:0016651">
    <property type="term" value="F:oxidoreductase activity, acting on NAD(P)H"/>
    <property type="evidence" value="ECO:0007669"/>
    <property type="project" value="InterPro"/>
</dbReference>
<dbReference type="CDD" id="cd08249">
    <property type="entry name" value="enoyl_reductase_like"/>
    <property type="match status" value="1"/>
</dbReference>
<dbReference type="Gene3D" id="3.90.180.10">
    <property type="entry name" value="Medium-chain alcohol dehydrogenases, catalytic domain"/>
    <property type="match status" value="1"/>
</dbReference>
<dbReference type="Gene3D" id="3.40.50.720">
    <property type="entry name" value="NAD(P)-binding Rossmann-like Domain"/>
    <property type="match status" value="1"/>
</dbReference>
<dbReference type="InterPro" id="IPR013149">
    <property type="entry name" value="ADH-like_C"/>
</dbReference>
<dbReference type="InterPro" id="IPR013154">
    <property type="entry name" value="ADH-like_N"/>
</dbReference>
<dbReference type="InterPro" id="IPR011032">
    <property type="entry name" value="GroES-like_sf"/>
</dbReference>
<dbReference type="InterPro" id="IPR036291">
    <property type="entry name" value="NAD(P)-bd_dom_sf"/>
</dbReference>
<dbReference type="InterPro" id="IPR020843">
    <property type="entry name" value="PKS_ER"/>
</dbReference>
<dbReference type="InterPro" id="IPR047122">
    <property type="entry name" value="Trans-enoyl_RdTase-like"/>
</dbReference>
<dbReference type="PANTHER" id="PTHR45348">
    <property type="entry name" value="HYPOTHETICAL OXIDOREDUCTASE (EUROFUNG)"/>
    <property type="match status" value="1"/>
</dbReference>
<dbReference type="PANTHER" id="PTHR45348:SF6">
    <property type="entry name" value="TRANS-ENOYL REDUCTASE APDC"/>
    <property type="match status" value="1"/>
</dbReference>
<dbReference type="Pfam" id="PF08240">
    <property type="entry name" value="ADH_N"/>
    <property type="match status" value="1"/>
</dbReference>
<dbReference type="Pfam" id="PF00107">
    <property type="entry name" value="ADH_zinc_N"/>
    <property type="match status" value="1"/>
</dbReference>
<dbReference type="SMART" id="SM00829">
    <property type="entry name" value="PKS_ER"/>
    <property type="match status" value="1"/>
</dbReference>
<dbReference type="SUPFAM" id="SSF50129">
    <property type="entry name" value="GroES-like"/>
    <property type="match status" value="1"/>
</dbReference>
<dbReference type="SUPFAM" id="SSF51735">
    <property type="entry name" value="NAD(P)-binding Rossmann-fold domains"/>
    <property type="match status" value="1"/>
</dbReference>
<gene>
    <name type="ORF">FFUJ_12240</name>
</gene>
<name>FUJ2_GIBF5</name>
<keyword id="KW-0521">NADP</keyword>
<keyword id="KW-0547">Nucleotide-binding</keyword>
<keyword id="KW-0560">Oxidoreductase</keyword>
<keyword id="KW-1185">Reference proteome</keyword>
<accession>S0EJ18</accession>
<organism>
    <name type="scientific">Gibberella fujikuroi (strain CBS 195.34 / IMI 58289 / NRRL A-6831)</name>
    <name type="common">Bakanae and foot rot disease fungus</name>
    <name type="synonym">Fusarium fujikuroi</name>
    <dbReference type="NCBI Taxonomy" id="1279085"/>
    <lineage>
        <taxon>Eukaryota</taxon>
        <taxon>Fungi</taxon>
        <taxon>Dikarya</taxon>
        <taxon>Ascomycota</taxon>
        <taxon>Pezizomycotina</taxon>
        <taxon>Sordariomycetes</taxon>
        <taxon>Hypocreomycetidae</taxon>
        <taxon>Hypocreales</taxon>
        <taxon>Nectriaceae</taxon>
        <taxon>Fusarium</taxon>
        <taxon>Fusarium fujikuroi species complex</taxon>
    </lineage>
</organism>
<feature type="chain" id="PRO_0000442009" description="Trans-enoyl reductase FFUJ_12240">
    <location>
        <begin position="1"/>
        <end position="346"/>
    </location>
</feature>
<feature type="binding site" evidence="1">
    <location>
        <begin position="40"/>
        <end position="43"/>
    </location>
    <ligand>
        <name>NADP(+)</name>
        <dbReference type="ChEBI" id="CHEBI:58349"/>
    </ligand>
</feature>
<feature type="binding site" evidence="2">
    <location>
        <begin position="124"/>
        <end position="131"/>
    </location>
    <ligand>
        <name>substrate</name>
    </ligand>
</feature>
<feature type="binding site" evidence="1">
    <location>
        <begin position="157"/>
        <end position="160"/>
    </location>
    <ligand>
        <name>NADP(+)</name>
        <dbReference type="ChEBI" id="CHEBI:58349"/>
    </ligand>
</feature>
<feature type="binding site" evidence="1">
    <location>
        <begin position="180"/>
        <end position="183"/>
    </location>
    <ligand>
        <name>NADP(+)</name>
        <dbReference type="ChEBI" id="CHEBI:58349"/>
    </ligand>
</feature>
<feature type="binding site" evidence="1">
    <location>
        <position position="198"/>
    </location>
    <ligand>
        <name>NADP(+)</name>
        <dbReference type="ChEBI" id="CHEBI:58349"/>
    </ligand>
</feature>
<feature type="binding site" evidence="1">
    <location>
        <begin position="245"/>
        <end position="246"/>
    </location>
    <ligand>
        <name>NADP(+)</name>
        <dbReference type="ChEBI" id="CHEBI:58349"/>
    </ligand>
</feature>
<feature type="binding site" evidence="2">
    <location>
        <begin position="266"/>
        <end position="270"/>
    </location>
    <ligand>
        <name>substrate</name>
    </ligand>
</feature>
<feature type="binding site" evidence="1">
    <location>
        <begin position="335"/>
        <end position="336"/>
    </location>
    <ligand>
        <name>NADP(+)</name>
        <dbReference type="ChEBI" id="CHEBI:58349"/>
    </ligand>
</feature>
<proteinExistence type="evidence at transcript level"/>
<comment type="function">
    <text evidence="3 4">Trans-enoyl reductase; part of the gene cluster that mediates the biosynthesis of fujikurins A-D, secondary metabolites playing a role during rice infection (PubMed:23825955, PubMed:26192387). The polyketide synthase PKS19 acts with the trans-enoyl reductase FFUJ_12240 and the polyketide transferase FFUJ_12241 to produce fujikurins, however, the biosynthesis pathway has not been identified yet (PubMed:23825955, PubMed:26192387).</text>
</comment>
<comment type="induction">
    <text evidence="3">The fujikurins gene cluster is specifically expressed during rice infection (PubMed:23825955).</text>
</comment>
<comment type="similarity">
    <text evidence="6">Belongs to the zinc-containing alcohol dehydrogenase family.</text>
</comment>
<evidence type="ECO:0000250" key="1">
    <source>
        <dbReference type="UniProtKB" id="Q9Y7D0"/>
    </source>
</evidence>
<evidence type="ECO:0000255" key="2"/>
<evidence type="ECO:0000269" key="3">
    <source>
    </source>
</evidence>
<evidence type="ECO:0000269" key="4">
    <source>
    </source>
</evidence>
<evidence type="ECO:0000303" key="5">
    <source>
    </source>
</evidence>
<evidence type="ECO:0000305" key="6"/>